<sequence>MAHIKFDYSKVLDKFVAPHEVDNLQAQVTVADEMIRKGTGPGADFLGWRDLPENYDREEFDRILKAAEKIKEESDVLVVIGIGGSYLGAKAAIDFLSNHFANLQTKEERKAPQIVYAGNSISSTYLADLLEYVEGKDFSVNVISKSGTTTEPAIAFRLFKELLVKKYGQEEANKRIYATTDRQKGAVKVEADANGWETFVVPDDIGGRFSVLTAVGLLPIAVSGADIKALMEGANAARKEYSSSKISENEAYQYAAIRNILYRKGYTTEILANYEPSLQYFAEWWKQLAGESEGKDQRGIYPTSANFSTDLHSLGQFIQEGTRNLFETVVRVDKPRKNVVIPELAEDLDGLGYLQGKDVDFVNKKATDGVLLAHTDGDVPNMFITIPEQDAFTLGYIIYFFELAIALSGYLNAVNPFNQPGVEAYKKNMFALLGKPGFEELGAELNARL</sequence>
<keyword id="KW-0963">Cytoplasm</keyword>
<keyword id="KW-0312">Gluconeogenesis</keyword>
<keyword id="KW-0324">Glycolysis</keyword>
<keyword id="KW-0413">Isomerase</keyword>
<feature type="chain" id="PRO_0000180746" description="Glucose-6-phosphate isomerase">
    <location>
        <begin position="1"/>
        <end position="449"/>
    </location>
</feature>
<feature type="active site" description="Proton donor" evidence="1">
    <location>
        <position position="291"/>
    </location>
</feature>
<feature type="active site" evidence="1">
    <location>
        <position position="312"/>
    </location>
</feature>
<feature type="active site" evidence="1">
    <location>
        <position position="426"/>
    </location>
</feature>
<dbReference type="EC" id="5.3.1.9" evidence="1"/>
<dbReference type="EMBL" id="CP000024">
    <property type="protein sequence ID" value="AAV61808.1"/>
    <property type="status" value="ALT_INIT"/>
    <property type="molecule type" value="Genomic_DNA"/>
</dbReference>
<dbReference type="RefSeq" id="WP_011680683.1">
    <property type="nucleotide sequence ID" value="NC_006449.1"/>
</dbReference>
<dbReference type="SMR" id="Q5M1N9"/>
<dbReference type="KEGG" id="stc:str0194"/>
<dbReference type="HOGENOM" id="CLU_037303_0_1_9"/>
<dbReference type="UniPathway" id="UPA00109">
    <property type="reaction ID" value="UER00181"/>
</dbReference>
<dbReference type="UniPathway" id="UPA00138"/>
<dbReference type="GO" id="GO:0005829">
    <property type="term" value="C:cytosol"/>
    <property type="evidence" value="ECO:0007669"/>
    <property type="project" value="TreeGrafter"/>
</dbReference>
<dbReference type="GO" id="GO:0097367">
    <property type="term" value="F:carbohydrate derivative binding"/>
    <property type="evidence" value="ECO:0007669"/>
    <property type="project" value="InterPro"/>
</dbReference>
<dbReference type="GO" id="GO:0004347">
    <property type="term" value="F:glucose-6-phosphate isomerase activity"/>
    <property type="evidence" value="ECO:0007669"/>
    <property type="project" value="UniProtKB-UniRule"/>
</dbReference>
<dbReference type="GO" id="GO:0048029">
    <property type="term" value="F:monosaccharide binding"/>
    <property type="evidence" value="ECO:0007669"/>
    <property type="project" value="TreeGrafter"/>
</dbReference>
<dbReference type="GO" id="GO:0006094">
    <property type="term" value="P:gluconeogenesis"/>
    <property type="evidence" value="ECO:0007669"/>
    <property type="project" value="UniProtKB-UniRule"/>
</dbReference>
<dbReference type="GO" id="GO:0051156">
    <property type="term" value="P:glucose 6-phosphate metabolic process"/>
    <property type="evidence" value="ECO:0007669"/>
    <property type="project" value="TreeGrafter"/>
</dbReference>
<dbReference type="GO" id="GO:0006096">
    <property type="term" value="P:glycolytic process"/>
    <property type="evidence" value="ECO:0007669"/>
    <property type="project" value="UniProtKB-UniRule"/>
</dbReference>
<dbReference type="CDD" id="cd05015">
    <property type="entry name" value="SIS_PGI_1"/>
    <property type="match status" value="1"/>
</dbReference>
<dbReference type="CDD" id="cd05016">
    <property type="entry name" value="SIS_PGI_2"/>
    <property type="match status" value="1"/>
</dbReference>
<dbReference type="FunFam" id="3.40.50.10490:FF:000015">
    <property type="entry name" value="Glucose-6-phosphate isomerase"/>
    <property type="match status" value="1"/>
</dbReference>
<dbReference type="FunFam" id="3.40.50.10490:FF:000016">
    <property type="entry name" value="Glucose-6-phosphate isomerase"/>
    <property type="match status" value="1"/>
</dbReference>
<dbReference type="Gene3D" id="3.40.50.10490">
    <property type="entry name" value="Glucose-6-phosphate isomerase like protein, domain 1"/>
    <property type="match status" value="3"/>
</dbReference>
<dbReference type="HAMAP" id="MF_00473">
    <property type="entry name" value="G6P_isomerase"/>
    <property type="match status" value="1"/>
</dbReference>
<dbReference type="InterPro" id="IPR001672">
    <property type="entry name" value="G6P_Isomerase"/>
</dbReference>
<dbReference type="InterPro" id="IPR018189">
    <property type="entry name" value="Phosphoglucose_isomerase_CS"/>
</dbReference>
<dbReference type="InterPro" id="IPR046348">
    <property type="entry name" value="SIS_dom_sf"/>
</dbReference>
<dbReference type="InterPro" id="IPR035476">
    <property type="entry name" value="SIS_PGI_1"/>
</dbReference>
<dbReference type="InterPro" id="IPR035482">
    <property type="entry name" value="SIS_PGI_2"/>
</dbReference>
<dbReference type="NCBIfam" id="NF010697">
    <property type="entry name" value="PRK14097.1"/>
    <property type="match status" value="1"/>
</dbReference>
<dbReference type="PANTHER" id="PTHR11469">
    <property type="entry name" value="GLUCOSE-6-PHOSPHATE ISOMERASE"/>
    <property type="match status" value="1"/>
</dbReference>
<dbReference type="PANTHER" id="PTHR11469:SF1">
    <property type="entry name" value="GLUCOSE-6-PHOSPHATE ISOMERASE"/>
    <property type="match status" value="1"/>
</dbReference>
<dbReference type="Pfam" id="PF00342">
    <property type="entry name" value="PGI"/>
    <property type="match status" value="1"/>
</dbReference>
<dbReference type="PRINTS" id="PR00662">
    <property type="entry name" value="G6PISOMERASE"/>
</dbReference>
<dbReference type="SUPFAM" id="SSF53697">
    <property type="entry name" value="SIS domain"/>
    <property type="match status" value="1"/>
</dbReference>
<dbReference type="PROSITE" id="PS00765">
    <property type="entry name" value="P_GLUCOSE_ISOMERASE_1"/>
    <property type="match status" value="1"/>
</dbReference>
<dbReference type="PROSITE" id="PS00174">
    <property type="entry name" value="P_GLUCOSE_ISOMERASE_2"/>
    <property type="match status" value="1"/>
</dbReference>
<dbReference type="PROSITE" id="PS51463">
    <property type="entry name" value="P_GLUCOSE_ISOMERASE_3"/>
    <property type="match status" value="1"/>
</dbReference>
<evidence type="ECO:0000255" key="1">
    <source>
        <dbReference type="HAMAP-Rule" id="MF_00473"/>
    </source>
</evidence>
<evidence type="ECO:0000305" key="2"/>
<proteinExistence type="inferred from homology"/>
<reference key="1">
    <citation type="journal article" date="2004" name="Nat. Biotechnol.">
        <title>Complete sequence and comparative genome analysis of the dairy bacterium Streptococcus thermophilus.</title>
        <authorList>
            <person name="Bolotin A."/>
            <person name="Quinquis B."/>
            <person name="Renault P."/>
            <person name="Sorokin A."/>
            <person name="Ehrlich S.D."/>
            <person name="Kulakauskas S."/>
            <person name="Lapidus A."/>
            <person name="Goltsman E."/>
            <person name="Mazur M."/>
            <person name="Pusch G.D."/>
            <person name="Fonstein M."/>
            <person name="Overbeek R."/>
            <person name="Kyprides N."/>
            <person name="Purnelle B."/>
            <person name="Prozzi D."/>
            <person name="Ngui K."/>
            <person name="Masuy D."/>
            <person name="Hancy F."/>
            <person name="Burteau S."/>
            <person name="Boutry M."/>
            <person name="Delcour J."/>
            <person name="Goffeau A."/>
            <person name="Hols P."/>
        </authorList>
    </citation>
    <scope>NUCLEOTIDE SEQUENCE [LARGE SCALE GENOMIC DNA]</scope>
    <source>
        <strain>CNRZ 1066</strain>
    </source>
</reference>
<accession>Q5M1N9</accession>
<gene>
    <name evidence="1" type="primary">pgi</name>
    <name type="ordered locus">str0194</name>
</gene>
<organism>
    <name type="scientific">Streptococcus thermophilus (strain CNRZ 1066)</name>
    <dbReference type="NCBI Taxonomy" id="299768"/>
    <lineage>
        <taxon>Bacteria</taxon>
        <taxon>Bacillati</taxon>
        <taxon>Bacillota</taxon>
        <taxon>Bacilli</taxon>
        <taxon>Lactobacillales</taxon>
        <taxon>Streptococcaceae</taxon>
        <taxon>Streptococcus</taxon>
    </lineage>
</organism>
<protein>
    <recommendedName>
        <fullName evidence="1">Glucose-6-phosphate isomerase</fullName>
        <shortName evidence="1">GPI</shortName>
        <ecNumber evidence="1">5.3.1.9</ecNumber>
    </recommendedName>
    <alternativeName>
        <fullName evidence="1">Phosphoglucose isomerase</fullName>
        <shortName evidence="1">PGI</shortName>
    </alternativeName>
    <alternativeName>
        <fullName evidence="1">Phosphohexose isomerase</fullName>
        <shortName evidence="1">PHI</shortName>
    </alternativeName>
</protein>
<comment type="function">
    <text evidence="1">Catalyzes the reversible isomerization of glucose-6-phosphate to fructose-6-phosphate.</text>
</comment>
<comment type="catalytic activity">
    <reaction evidence="1">
        <text>alpha-D-glucose 6-phosphate = beta-D-fructose 6-phosphate</text>
        <dbReference type="Rhea" id="RHEA:11816"/>
        <dbReference type="ChEBI" id="CHEBI:57634"/>
        <dbReference type="ChEBI" id="CHEBI:58225"/>
        <dbReference type="EC" id="5.3.1.9"/>
    </reaction>
</comment>
<comment type="pathway">
    <text evidence="1">Carbohydrate biosynthesis; gluconeogenesis.</text>
</comment>
<comment type="pathway">
    <text evidence="1">Carbohydrate degradation; glycolysis; D-glyceraldehyde 3-phosphate and glycerone phosphate from D-glucose: step 2/4.</text>
</comment>
<comment type="subcellular location">
    <subcellularLocation>
        <location evidence="1">Cytoplasm</location>
    </subcellularLocation>
</comment>
<comment type="similarity">
    <text evidence="1">Belongs to the GPI family.</text>
</comment>
<comment type="sequence caution" evidence="2">
    <conflict type="erroneous initiation">
        <sequence resource="EMBL-CDS" id="AAV61808"/>
    </conflict>
</comment>
<name>G6PI_STRT1</name>